<proteinExistence type="evidence at protein level"/>
<accession>P0AGD3</accession>
<accession>P09157</accession>
<reference key="1">
    <citation type="journal article" date="1988" name="J. Biol. Chem.">
        <title>Iron superoxide dismutase. Nucleotide sequence of the gene from Escherichia coli K12 and correlations with crystal structures.</title>
        <authorList>
            <person name="Carlioz A."/>
            <person name="Ludwig M.L."/>
            <person name="Stallings W.C."/>
            <person name="Fee J.A."/>
            <person name="Steinman H.M."/>
            <person name="Touati D."/>
        </authorList>
    </citation>
    <scope>NUCLEOTIDE SEQUENCE [GENOMIC DNA]</scope>
    <scope>PROTEIN SEQUENCE OF 30-35; 44-57 AND 79-116</scope>
    <source>
        <strain>K12</strain>
    </source>
</reference>
<reference key="2">
    <citation type="journal article" date="1996" name="DNA Res.">
        <title>A 570-kb DNA sequence of the Escherichia coli K-12 genome corresponding to the 28.0-40.1 min region on the linkage map.</title>
        <authorList>
            <person name="Aiba H."/>
            <person name="Baba T."/>
            <person name="Fujita K."/>
            <person name="Hayashi K."/>
            <person name="Inada T."/>
            <person name="Isono K."/>
            <person name="Itoh T."/>
            <person name="Kasai H."/>
            <person name="Kashimoto K."/>
            <person name="Kimura S."/>
            <person name="Kitakawa M."/>
            <person name="Kitagawa M."/>
            <person name="Makino K."/>
            <person name="Miki T."/>
            <person name="Mizobuchi K."/>
            <person name="Mori H."/>
            <person name="Mori T."/>
            <person name="Motomura K."/>
            <person name="Nakade S."/>
            <person name="Nakamura Y."/>
            <person name="Nashimoto H."/>
            <person name="Nishio Y."/>
            <person name="Oshima T."/>
            <person name="Saito N."/>
            <person name="Sampei G."/>
            <person name="Seki Y."/>
            <person name="Sivasundaram S."/>
            <person name="Tagami H."/>
            <person name="Takeda J."/>
            <person name="Takemoto K."/>
            <person name="Takeuchi Y."/>
            <person name="Wada C."/>
            <person name="Yamamoto Y."/>
            <person name="Horiuchi T."/>
        </authorList>
    </citation>
    <scope>NUCLEOTIDE SEQUENCE [LARGE SCALE GENOMIC DNA]</scope>
    <source>
        <strain>K12 / W3110 / ATCC 27325 / DSM 5911</strain>
    </source>
</reference>
<reference key="3">
    <citation type="journal article" date="1997" name="Science">
        <title>The complete genome sequence of Escherichia coli K-12.</title>
        <authorList>
            <person name="Blattner F.R."/>
            <person name="Plunkett G. III"/>
            <person name="Bloch C.A."/>
            <person name="Perna N.T."/>
            <person name="Burland V."/>
            <person name="Riley M."/>
            <person name="Collado-Vides J."/>
            <person name="Glasner J.D."/>
            <person name="Rode C.K."/>
            <person name="Mayhew G.F."/>
            <person name="Gregor J."/>
            <person name="Davis N.W."/>
            <person name="Kirkpatrick H.A."/>
            <person name="Goeden M.A."/>
            <person name="Rose D.J."/>
            <person name="Mau B."/>
            <person name="Shao Y."/>
        </authorList>
    </citation>
    <scope>NUCLEOTIDE SEQUENCE [LARGE SCALE GENOMIC DNA]</scope>
    <source>
        <strain>K12 / MG1655 / ATCC 47076</strain>
    </source>
</reference>
<reference key="4">
    <citation type="journal article" date="2006" name="Mol. Syst. Biol.">
        <title>Highly accurate genome sequences of Escherichia coli K-12 strains MG1655 and W3110.</title>
        <authorList>
            <person name="Hayashi K."/>
            <person name="Morooka N."/>
            <person name="Yamamoto Y."/>
            <person name="Fujita K."/>
            <person name="Isono K."/>
            <person name="Choi S."/>
            <person name="Ohtsubo E."/>
            <person name="Baba T."/>
            <person name="Wanner B.L."/>
            <person name="Mori H."/>
            <person name="Horiuchi T."/>
        </authorList>
    </citation>
    <scope>NUCLEOTIDE SEQUENCE [LARGE SCALE GENOMIC DNA]</scope>
    <source>
        <strain>K12 / W3110 / ATCC 27325 / DSM 5911</strain>
    </source>
</reference>
<reference key="5">
    <citation type="journal article" date="1987" name="FEBS Lett.">
        <title>The primary structure of iron superoxide dismutase from Escherichia coli.</title>
        <authorList>
            <person name="Schinina M.E."/>
            <person name="Maffey L."/>
            <person name="Barra D."/>
            <person name="Bossa F."/>
            <person name="Puget K."/>
            <person name="Michelson A.M."/>
        </authorList>
    </citation>
    <scope>PROTEIN SEQUENCE OF 2-193</scope>
</reference>
<reference key="6">
    <citation type="journal article" date="1973" name="Proc. Natl. Acad. Sci. U.S.A.">
        <title>Sequence homologies among bacterial and mitochondrial superoxide dismutases.</title>
        <authorList>
            <person name="Steinman H.M."/>
            <person name="Hill R.L."/>
        </authorList>
    </citation>
    <scope>PROTEIN SEQUENCE OF 2-30</scope>
</reference>
<reference key="7">
    <citation type="journal article" date="1997" name="Electrophoresis">
        <title>Comparing the predicted and observed properties of proteins encoded in the genome of Escherichia coli K-12.</title>
        <authorList>
            <person name="Link A.J."/>
            <person name="Robison K."/>
            <person name="Church G.M."/>
        </authorList>
    </citation>
    <scope>PROTEIN SEQUENCE OF 2-13</scope>
    <source>
        <strain>K12 / EMG2</strain>
    </source>
</reference>
<reference key="8">
    <citation type="journal article" date="1998" name="J. Mol. Biol.">
        <title>Protein identification with N and C-terminal sequence tags in proteome projects.</title>
        <authorList>
            <person name="Wilkins M.R."/>
            <person name="Gasteiger E."/>
            <person name="Tonella L."/>
            <person name="Ou K."/>
            <person name="Tyler M."/>
            <person name="Sanchez J.-C."/>
            <person name="Gooley A.A."/>
            <person name="Walsh B.J."/>
            <person name="Bairoch A."/>
            <person name="Appel R.D."/>
            <person name="Williams K.L."/>
            <person name="Hochstrasser D.F."/>
        </authorList>
    </citation>
    <scope>PROTEIN SEQUENCE OF 2-5</scope>
    <source>
        <strain>K12 / W3110 / ATCC 27325 / DSM 5911</strain>
    </source>
</reference>
<reference key="9">
    <citation type="journal article" date="1997" name="Biochemistry">
        <title>Spectroscopic measurement of a long-predicted active site pK in iron-superoxide dismutase from Escherichia coli.</title>
        <authorList>
            <person name="Sorkin D.L."/>
            <person name="Miller A.-F."/>
        </authorList>
    </citation>
    <scope>CATALYTIC ACTIVITY</scope>
    <scope>COFACTOR</scope>
</reference>
<reference key="10">
    <citation type="journal article" date="1997" name="Electrophoresis">
        <title>Escherichia coli proteome analysis using the gene-protein database.</title>
        <authorList>
            <person name="VanBogelen R.A."/>
            <person name="Abshire K.Z."/>
            <person name="Moldover B."/>
            <person name="Olson E.R."/>
            <person name="Neidhardt F.C."/>
        </authorList>
    </citation>
    <scope>IDENTIFICATION BY 2D-GEL</scope>
</reference>
<reference key="11">
    <citation type="journal article" date="2009" name="Mol. Cell. Proteomics">
        <title>Lysine acetylation is a highly abundant and evolutionarily conserved modification in Escherichia coli.</title>
        <authorList>
            <person name="Zhang J."/>
            <person name="Sprung R."/>
            <person name="Pei J."/>
            <person name="Tan X."/>
            <person name="Kim S."/>
            <person name="Zhu H."/>
            <person name="Liu C.F."/>
            <person name="Grishin N.V."/>
            <person name="Zhao Y."/>
        </authorList>
    </citation>
    <scope>ACETYLATION [LARGE SCALE ANALYSIS] AT LYS-51</scope>
    <scope>IDENTIFICATION BY MASS SPECTROMETRY</scope>
    <source>
        <strain>K12 / JW1106</strain>
        <strain>K12 / MG1655 / ATCC 47076</strain>
    </source>
</reference>
<reference key="12">
    <citation type="journal article" date="2011" name="Genes Dev.">
        <title>Small RNA-induced mRNA degradation achieved through both translation block and activated cleavage.</title>
        <authorList>
            <person name="Prevost K."/>
            <person name="Desnoyers G."/>
            <person name="Jacques J.F."/>
            <person name="Lavoie F."/>
            <person name="Masse E."/>
        </authorList>
    </citation>
    <scope>INDUCTION</scope>
    <source>
        <strain>K12 / MG1655 / ATCC 47076</strain>
    </source>
</reference>
<reference key="13">
    <citation type="journal article" date="2021" name="Proc. Natl. Acad. Sci. U.S.A.">
        <title>A fluorescence-based genetic screen reveals diverse mechanisms silencing small RNA signaling in E. coli.</title>
        <authorList>
            <person name="Chen J."/>
            <person name="To L."/>
            <person name="de Mets F."/>
            <person name="Luo X."/>
            <person name="Majdalani N."/>
            <person name="Tai C.H."/>
            <person name="Gottesman S."/>
        </authorList>
    </citation>
    <scope>INDUCTION</scope>
    <source>
        <strain>K12 / MG1655 / ATCC 47076</strain>
    </source>
</reference>
<reference key="14">
    <citation type="journal article" date="1983" name="Proc. Natl. Acad. Sci. U.S.A.">
        <title>Iron superoxide dismutase from Escherichia coli at 3.1-A resolution: a structure unlike that of copper/zinc protein at both monomer and dimer levels.</title>
        <authorList>
            <person name="Stallings W.C."/>
            <person name="Powers T.B."/>
            <person name="Pattridge K.A."/>
            <person name="Fee J.A."/>
            <person name="Ludwig M.L."/>
        </authorList>
    </citation>
    <scope>X-RAY CRYSTALLOGRAPHY (2.9 ANGSTROMS) IN COMPLEX WITH IRON ION</scope>
    <scope>SUBUNIT</scope>
</reference>
<feature type="initiator methionine" description="Removed" evidence="3 5 8 9">
    <location>
        <position position="1"/>
    </location>
</feature>
<feature type="chain" id="PRO_0000159979" description="Superoxide dismutase [Fe]">
    <location>
        <begin position="2"/>
        <end position="193"/>
    </location>
</feature>
<feature type="binding site">
    <location>
        <position position="27"/>
    </location>
    <ligand>
        <name>Fe cation</name>
        <dbReference type="ChEBI" id="CHEBI:24875"/>
    </ligand>
</feature>
<feature type="binding site">
    <location>
        <position position="74"/>
    </location>
    <ligand>
        <name>Fe cation</name>
        <dbReference type="ChEBI" id="CHEBI:24875"/>
    </ligand>
</feature>
<feature type="binding site">
    <location>
        <position position="157"/>
    </location>
    <ligand>
        <name>Fe cation</name>
        <dbReference type="ChEBI" id="CHEBI:24875"/>
    </ligand>
</feature>
<feature type="binding site">
    <location>
        <position position="161"/>
    </location>
    <ligand>
        <name>Fe cation</name>
        <dbReference type="ChEBI" id="CHEBI:24875"/>
    </ligand>
</feature>
<feature type="modified residue" description="N6-acetyllysine" evidence="1">
    <location>
        <position position="51"/>
    </location>
</feature>
<feature type="turn" evidence="11">
    <location>
        <begin position="12"/>
        <end position="18"/>
    </location>
</feature>
<feature type="helix" evidence="11">
    <location>
        <begin position="21"/>
        <end position="29"/>
    </location>
</feature>
<feature type="helix" evidence="11">
    <location>
        <begin position="31"/>
        <end position="43"/>
    </location>
</feature>
<feature type="turn" evidence="11">
    <location>
        <begin position="47"/>
        <end position="50"/>
    </location>
</feature>
<feature type="helix" evidence="11">
    <location>
        <begin position="53"/>
        <end position="57"/>
    </location>
</feature>
<feature type="helix" evidence="11">
    <location>
        <begin position="62"/>
        <end position="79"/>
    </location>
</feature>
<feature type="helix" evidence="11">
    <location>
        <begin position="91"/>
        <end position="101"/>
    </location>
</feature>
<feature type="helix" evidence="11">
    <location>
        <begin position="104"/>
        <end position="117"/>
    </location>
</feature>
<feature type="strand" evidence="11">
    <location>
        <begin position="120"/>
        <end position="128"/>
    </location>
</feature>
<feature type="strand" evidence="11">
    <location>
        <begin position="134"/>
        <end position="140"/>
    </location>
</feature>
<feature type="helix" evidence="11">
    <location>
        <begin position="145"/>
        <end position="147"/>
    </location>
</feature>
<feature type="strand" evidence="11">
    <location>
        <begin position="151"/>
        <end position="157"/>
    </location>
</feature>
<feature type="helix" evidence="11">
    <location>
        <begin position="160"/>
        <end position="162"/>
    </location>
</feature>
<feature type="helix" evidence="11">
    <location>
        <begin position="164"/>
        <end position="167"/>
    </location>
</feature>
<feature type="helix" evidence="11">
    <location>
        <begin position="171"/>
        <end position="179"/>
    </location>
</feature>
<feature type="helix" evidence="11">
    <location>
        <begin position="184"/>
        <end position="192"/>
    </location>
</feature>
<sequence length="193" mass="21266">MSFELPALPYAKDALAPHISAETIEYHYGKHHQTYVTNLNNLIKGTAFEGKSLEEIIRSSEGGVFNNAAQVWNHTFYWNCLAPNAGGEPTGKVAEAIAASFGSFADFKAQFTDAAIKNFGSGWTWLVKNSDGKLAIVSTSNAGTPLTTDATPLLTVDVWEHAYYIDYRNARPGYLEHFWALVNWEFVAKNLAA</sequence>
<keyword id="KW-0002">3D-structure</keyword>
<keyword id="KW-0007">Acetylation</keyword>
<keyword id="KW-0903">Direct protein sequencing</keyword>
<keyword id="KW-0408">Iron</keyword>
<keyword id="KW-0479">Metal-binding</keyword>
<keyword id="KW-0560">Oxidoreductase</keyword>
<keyword id="KW-1185">Reference proteome</keyword>
<evidence type="ECO:0000269" key="1">
    <source>
    </source>
</evidence>
<evidence type="ECO:0000269" key="2">
    <source>
    </source>
</evidence>
<evidence type="ECO:0000269" key="3">
    <source>
    </source>
</evidence>
<evidence type="ECO:0000269" key="4">
    <source>
    </source>
</evidence>
<evidence type="ECO:0000269" key="5">
    <source>
    </source>
</evidence>
<evidence type="ECO:0000269" key="6">
    <source>
    </source>
</evidence>
<evidence type="ECO:0000269" key="7">
    <source>
    </source>
</evidence>
<evidence type="ECO:0000269" key="8">
    <source>
    </source>
</evidence>
<evidence type="ECO:0000269" key="9">
    <source>
    </source>
</evidence>
<evidence type="ECO:0000305" key="10"/>
<evidence type="ECO:0007829" key="11">
    <source>
        <dbReference type="PDB" id="2NYB"/>
    </source>
</evidence>
<gene>
    <name type="primary">sodB</name>
    <name type="ordered locus">b1656</name>
    <name type="ordered locus">JW1648</name>
</gene>
<organism>
    <name type="scientific">Escherichia coli (strain K12)</name>
    <dbReference type="NCBI Taxonomy" id="83333"/>
    <lineage>
        <taxon>Bacteria</taxon>
        <taxon>Pseudomonadati</taxon>
        <taxon>Pseudomonadota</taxon>
        <taxon>Gammaproteobacteria</taxon>
        <taxon>Enterobacterales</taxon>
        <taxon>Enterobacteriaceae</taxon>
        <taxon>Escherichia</taxon>
    </lineage>
</organism>
<protein>
    <recommendedName>
        <fullName>Superoxide dismutase [Fe]</fullName>
        <ecNumber evidence="7">1.15.1.1</ecNumber>
    </recommendedName>
</protein>
<comment type="function">
    <text>Destroys superoxide anion radicals which are normally produced within the cells and which are toxic to biological systems.</text>
</comment>
<comment type="catalytic activity">
    <reaction evidence="7">
        <text>2 superoxide + 2 H(+) = H2O2 + O2</text>
        <dbReference type="Rhea" id="RHEA:20696"/>
        <dbReference type="ChEBI" id="CHEBI:15378"/>
        <dbReference type="ChEBI" id="CHEBI:15379"/>
        <dbReference type="ChEBI" id="CHEBI:16240"/>
        <dbReference type="ChEBI" id="CHEBI:18421"/>
        <dbReference type="EC" id="1.15.1.1"/>
    </reaction>
</comment>
<comment type="cofactor">
    <cofactor evidence="7">
        <name>Fe cation</name>
        <dbReference type="ChEBI" id="CHEBI:24875"/>
    </cofactor>
    <text evidence="7">Binds 1 Fe cation per subunit.</text>
</comment>
<comment type="subunit">
    <text evidence="6">Homodimer.</text>
</comment>
<comment type="induction">
    <text evidence="2 4">The transcript is subject to small RNA (sRNA)-mediated degradation; sRNA RyhB-binding at the ribosome-binding site (RBS) both blocks translation and induces mRNA cleavage by the RNA degradosome over 350 bases downstream. RhyB blocks translation even in the absence of the RNA degradosome (PubMed:21289064). Deletion of fur derepresses rhyB expression, and leads to less expression of this gene (PubMed:34210798).</text>
</comment>
<comment type="similarity">
    <text evidence="10">Belongs to the iron/manganese superoxide dismutase family.</text>
</comment>
<name>SODF_ECOLI</name>
<dbReference type="EC" id="1.15.1.1" evidence="7"/>
<dbReference type="EMBL" id="J03511">
    <property type="protein sequence ID" value="AAA24637.1"/>
    <property type="molecule type" value="Genomic_DNA"/>
</dbReference>
<dbReference type="EMBL" id="U00096">
    <property type="protein sequence ID" value="AAC74728.1"/>
    <property type="molecule type" value="Genomic_DNA"/>
</dbReference>
<dbReference type="EMBL" id="AP009048">
    <property type="protein sequence ID" value="BAA15422.1"/>
    <property type="molecule type" value="Genomic_DNA"/>
</dbReference>
<dbReference type="PIR" id="A29940">
    <property type="entry name" value="DSECF"/>
</dbReference>
<dbReference type="RefSeq" id="NP_416173.1">
    <property type="nucleotide sequence ID" value="NC_000913.3"/>
</dbReference>
<dbReference type="RefSeq" id="WP_000007283.1">
    <property type="nucleotide sequence ID" value="NZ_STEB01000003.1"/>
</dbReference>
<dbReference type="PDB" id="1ISA">
    <property type="method" value="X-ray"/>
    <property type="resolution" value="1.80 A"/>
    <property type="chains" value="A/B=2-193"/>
</dbReference>
<dbReference type="PDB" id="1ISB">
    <property type="method" value="X-ray"/>
    <property type="resolution" value="1.85 A"/>
    <property type="chains" value="A/B=2-193"/>
</dbReference>
<dbReference type="PDB" id="1ISC">
    <property type="method" value="X-ray"/>
    <property type="resolution" value="1.80 A"/>
    <property type="chains" value="A/B=2-193"/>
</dbReference>
<dbReference type="PDB" id="1ZA5">
    <property type="method" value="X-ray"/>
    <property type="resolution" value="1.80 A"/>
    <property type="chains" value="A/B=2-193"/>
</dbReference>
<dbReference type="PDB" id="2BKB">
    <property type="method" value="X-ray"/>
    <property type="resolution" value="1.70 A"/>
    <property type="chains" value="A/B/C/D=2-193"/>
</dbReference>
<dbReference type="PDB" id="2NYB">
    <property type="method" value="X-ray"/>
    <property type="resolution" value="1.10 A"/>
    <property type="chains" value="A/B/C/D=2-193"/>
</dbReference>
<dbReference type="PDBsum" id="1ISA"/>
<dbReference type="PDBsum" id="1ISB"/>
<dbReference type="PDBsum" id="1ISC"/>
<dbReference type="PDBsum" id="1ZA5"/>
<dbReference type="PDBsum" id="2BKB"/>
<dbReference type="PDBsum" id="2NYB"/>
<dbReference type="BMRB" id="P0AGD3"/>
<dbReference type="SMR" id="P0AGD3"/>
<dbReference type="BioGRID" id="4260265">
    <property type="interactions" value="68"/>
</dbReference>
<dbReference type="FunCoup" id="P0AGD3">
    <property type="interactions" value="290"/>
</dbReference>
<dbReference type="IntAct" id="P0AGD3">
    <property type="interactions" value="6"/>
</dbReference>
<dbReference type="STRING" id="511145.b1656"/>
<dbReference type="iPTMnet" id="P0AGD3"/>
<dbReference type="jPOST" id="P0AGD3"/>
<dbReference type="PaxDb" id="511145-b1656"/>
<dbReference type="EnsemblBacteria" id="AAC74728">
    <property type="protein sequence ID" value="AAC74728"/>
    <property type="gene ID" value="b1656"/>
</dbReference>
<dbReference type="GeneID" id="93775810"/>
<dbReference type="GeneID" id="944953"/>
<dbReference type="KEGG" id="ecj:JW1648"/>
<dbReference type="KEGG" id="eco:b1656"/>
<dbReference type="KEGG" id="ecoc:C3026_09500"/>
<dbReference type="PATRIC" id="fig|1411691.4.peg.602"/>
<dbReference type="EchoBASE" id="EB0947"/>
<dbReference type="eggNOG" id="COG0605">
    <property type="taxonomic scope" value="Bacteria"/>
</dbReference>
<dbReference type="HOGENOM" id="CLU_031625_0_0_6"/>
<dbReference type="InParanoid" id="P0AGD3"/>
<dbReference type="OMA" id="DSLINWD"/>
<dbReference type="OrthoDB" id="9803125at2"/>
<dbReference type="PhylomeDB" id="P0AGD3"/>
<dbReference type="BioCyc" id="EcoCyc:SUPEROX-DISMUTFE-MONOMER"/>
<dbReference type="BioCyc" id="MetaCyc:SUPEROX-DISMUTFE-MONOMER"/>
<dbReference type="BRENDA" id="1.15.1.1">
    <property type="organism ID" value="2026"/>
</dbReference>
<dbReference type="EvolutionaryTrace" id="P0AGD3"/>
<dbReference type="PRO" id="PR:P0AGD3"/>
<dbReference type="Proteomes" id="UP000000625">
    <property type="component" value="Chromosome"/>
</dbReference>
<dbReference type="GO" id="GO:0005737">
    <property type="term" value="C:cytoplasm"/>
    <property type="evidence" value="ECO:0000314"/>
    <property type="project" value="EcoliWiki"/>
</dbReference>
<dbReference type="GO" id="GO:0005829">
    <property type="term" value="C:cytosol"/>
    <property type="evidence" value="ECO:0007005"/>
    <property type="project" value="UniProtKB"/>
</dbReference>
<dbReference type="GO" id="GO:0016020">
    <property type="term" value="C:membrane"/>
    <property type="evidence" value="ECO:0007005"/>
    <property type="project" value="UniProtKB"/>
</dbReference>
<dbReference type="GO" id="GO:0005506">
    <property type="term" value="F:iron ion binding"/>
    <property type="evidence" value="ECO:0000314"/>
    <property type="project" value="EcoCyc"/>
</dbReference>
<dbReference type="GO" id="GO:0016491">
    <property type="term" value="F:oxidoreductase activity"/>
    <property type="evidence" value="ECO:0000314"/>
    <property type="project" value="EcoliWiki"/>
</dbReference>
<dbReference type="GO" id="GO:0004784">
    <property type="term" value="F:superoxide dismutase activity"/>
    <property type="evidence" value="ECO:0000314"/>
    <property type="project" value="EcoliWiki"/>
</dbReference>
<dbReference type="GO" id="GO:0019430">
    <property type="term" value="P:removal of superoxide radicals"/>
    <property type="evidence" value="ECO:0000314"/>
    <property type="project" value="EcoliWiki"/>
</dbReference>
<dbReference type="GO" id="GO:0000303">
    <property type="term" value="P:response to superoxide"/>
    <property type="evidence" value="ECO:0000314"/>
    <property type="project" value="EcoliWiki"/>
</dbReference>
<dbReference type="GO" id="GO:0006801">
    <property type="term" value="P:superoxide metabolic process"/>
    <property type="evidence" value="ECO:0000314"/>
    <property type="project" value="EcoliWiki"/>
</dbReference>
<dbReference type="FunFam" id="1.10.287.990:FF:000002">
    <property type="entry name" value="Superoxide dismutase"/>
    <property type="match status" value="1"/>
</dbReference>
<dbReference type="FunFam" id="3.55.40.20:FF:000001">
    <property type="entry name" value="Superoxide dismutase"/>
    <property type="match status" value="1"/>
</dbReference>
<dbReference type="Gene3D" id="1.10.287.990">
    <property type="entry name" value="Fe,Mn superoxide dismutase (SOD) domain"/>
    <property type="match status" value="1"/>
</dbReference>
<dbReference type="Gene3D" id="3.55.40.20">
    <property type="entry name" value="Iron/manganese superoxide dismutase, C-terminal domain"/>
    <property type="match status" value="1"/>
</dbReference>
<dbReference type="InterPro" id="IPR001189">
    <property type="entry name" value="Mn/Fe_SOD"/>
</dbReference>
<dbReference type="InterPro" id="IPR019833">
    <property type="entry name" value="Mn/Fe_SOD_BS"/>
</dbReference>
<dbReference type="InterPro" id="IPR019832">
    <property type="entry name" value="Mn/Fe_SOD_C"/>
</dbReference>
<dbReference type="InterPro" id="IPR019831">
    <property type="entry name" value="Mn/Fe_SOD_N"/>
</dbReference>
<dbReference type="InterPro" id="IPR036324">
    <property type="entry name" value="Mn/Fe_SOD_N_sf"/>
</dbReference>
<dbReference type="InterPro" id="IPR036314">
    <property type="entry name" value="SOD_C_sf"/>
</dbReference>
<dbReference type="NCBIfam" id="NF007832">
    <property type="entry name" value="PRK10543.1"/>
    <property type="match status" value="1"/>
</dbReference>
<dbReference type="PANTHER" id="PTHR42769">
    <property type="entry name" value="SUPEROXIDE DISMUTASE"/>
    <property type="match status" value="1"/>
</dbReference>
<dbReference type="PANTHER" id="PTHR42769:SF3">
    <property type="entry name" value="SUPEROXIDE DISMUTASE [FE] 2, CHLOROPLASTIC"/>
    <property type="match status" value="1"/>
</dbReference>
<dbReference type="Pfam" id="PF02777">
    <property type="entry name" value="Sod_Fe_C"/>
    <property type="match status" value="1"/>
</dbReference>
<dbReference type="Pfam" id="PF00081">
    <property type="entry name" value="Sod_Fe_N"/>
    <property type="match status" value="1"/>
</dbReference>
<dbReference type="PIRSF" id="PIRSF000349">
    <property type="entry name" value="SODismutase"/>
    <property type="match status" value="1"/>
</dbReference>
<dbReference type="PRINTS" id="PR01703">
    <property type="entry name" value="MNSODISMTASE"/>
</dbReference>
<dbReference type="SUPFAM" id="SSF54719">
    <property type="entry name" value="Fe,Mn superoxide dismutase (SOD), C-terminal domain"/>
    <property type="match status" value="1"/>
</dbReference>
<dbReference type="SUPFAM" id="SSF46609">
    <property type="entry name" value="Fe,Mn superoxide dismutase (SOD), N-terminal domain"/>
    <property type="match status" value="1"/>
</dbReference>
<dbReference type="PROSITE" id="PS00088">
    <property type="entry name" value="SOD_MN"/>
    <property type="match status" value="1"/>
</dbReference>